<dbReference type="EMBL" id="AE017197">
    <property type="protein sequence ID" value="AAU04095.1"/>
    <property type="molecule type" value="Genomic_DNA"/>
</dbReference>
<dbReference type="RefSeq" id="WP_011191074.1">
    <property type="nucleotide sequence ID" value="NC_006142.1"/>
</dbReference>
<dbReference type="SMR" id="Q68W97"/>
<dbReference type="KEGG" id="rty:RT0632"/>
<dbReference type="eggNOG" id="COG0200">
    <property type="taxonomic scope" value="Bacteria"/>
</dbReference>
<dbReference type="HOGENOM" id="CLU_055188_4_0_5"/>
<dbReference type="OrthoDB" id="9810293at2"/>
<dbReference type="Proteomes" id="UP000000604">
    <property type="component" value="Chromosome"/>
</dbReference>
<dbReference type="GO" id="GO:0015934">
    <property type="term" value="C:large ribosomal subunit"/>
    <property type="evidence" value="ECO:0007669"/>
    <property type="project" value="InterPro"/>
</dbReference>
<dbReference type="GO" id="GO:0019843">
    <property type="term" value="F:rRNA binding"/>
    <property type="evidence" value="ECO:0007669"/>
    <property type="project" value="UniProtKB-UniRule"/>
</dbReference>
<dbReference type="GO" id="GO:0003735">
    <property type="term" value="F:structural constituent of ribosome"/>
    <property type="evidence" value="ECO:0007669"/>
    <property type="project" value="InterPro"/>
</dbReference>
<dbReference type="GO" id="GO:0006412">
    <property type="term" value="P:translation"/>
    <property type="evidence" value="ECO:0007669"/>
    <property type="project" value="UniProtKB-UniRule"/>
</dbReference>
<dbReference type="Gene3D" id="3.100.10.10">
    <property type="match status" value="1"/>
</dbReference>
<dbReference type="HAMAP" id="MF_01341">
    <property type="entry name" value="Ribosomal_uL15"/>
    <property type="match status" value="1"/>
</dbReference>
<dbReference type="InterPro" id="IPR030878">
    <property type="entry name" value="Ribosomal_uL15"/>
</dbReference>
<dbReference type="InterPro" id="IPR021131">
    <property type="entry name" value="Ribosomal_uL15/eL18"/>
</dbReference>
<dbReference type="InterPro" id="IPR036227">
    <property type="entry name" value="Ribosomal_uL15/eL18_sf"/>
</dbReference>
<dbReference type="InterPro" id="IPR005749">
    <property type="entry name" value="Ribosomal_uL15_bac-type"/>
</dbReference>
<dbReference type="NCBIfam" id="TIGR01071">
    <property type="entry name" value="rplO_bact"/>
    <property type="match status" value="1"/>
</dbReference>
<dbReference type="PANTHER" id="PTHR12934">
    <property type="entry name" value="50S RIBOSOMAL PROTEIN L15"/>
    <property type="match status" value="1"/>
</dbReference>
<dbReference type="PANTHER" id="PTHR12934:SF11">
    <property type="entry name" value="LARGE RIBOSOMAL SUBUNIT PROTEIN UL15M"/>
    <property type="match status" value="1"/>
</dbReference>
<dbReference type="Pfam" id="PF00828">
    <property type="entry name" value="Ribosomal_L27A"/>
    <property type="match status" value="1"/>
</dbReference>
<dbReference type="SUPFAM" id="SSF52080">
    <property type="entry name" value="Ribosomal proteins L15p and L18e"/>
    <property type="match status" value="1"/>
</dbReference>
<evidence type="ECO:0000255" key="1">
    <source>
        <dbReference type="HAMAP-Rule" id="MF_01341"/>
    </source>
</evidence>
<evidence type="ECO:0000305" key="2"/>
<organism>
    <name type="scientific">Rickettsia typhi (strain ATCC VR-144 / Wilmington)</name>
    <dbReference type="NCBI Taxonomy" id="257363"/>
    <lineage>
        <taxon>Bacteria</taxon>
        <taxon>Pseudomonadati</taxon>
        <taxon>Pseudomonadota</taxon>
        <taxon>Alphaproteobacteria</taxon>
        <taxon>Rickettsiales</taxon>
        <taxon>Rickettsiaceae</taxon>
        <taxon>Rickettsieae</taxon>
        <taxon>Rickettsia</taxon>
        <taxon>typhus group</taxon>
    </lineage>
</organism>
<name>RL15_RICTY</name>
<keyword id="KW-0687">Ribonucleoprotein</keyword>
<keyword id="KW-0689">Ribosomal protein</keyword>
<keyword id="KW-0694">RNA-binding</keyword>
<keyword id="KW-0699">rRNA-binding</keyword>
<proteinExistence type="inferred from homology"/>
<comment type="function">
    <text evidence="1">Binds to the 23S rRNA.</text>
</comment>
<comment type="subunit">
    <text evidence="1">Part of the 50S ribosomal subunit.</text>
</comment>
<comment type="similarity">
    <text evidence="1">Belongs to the universal ribosomal protein uL15 family.</text>
</comment>
<feature type="chain" id="PRO_0000104798" description="Large ribosomal subunit protein uL15">
    <location>
        <begin position="1"/>
        <end position="150"/>
    </location>
</feature>
<reference key="1">
    <citation type="journal article" date="2004" name="J. Bacteriol.">
        <title>Complete genome sequence of Rickettsia typhi and comparison with sequences of other Rickettsiae.</title>
        <authorList>
            <person name="McLeod M.P."/>
            <person name="Qin X."/>
            <person name="Karpathy S.E."/>
            <person name="Gioia J."/>
            <person name="Highlander S.K."/>
            <person name="Fox G.E."/>
            <person name="McNeill T.Z."/>
            <person name="Jiang H."/>
            <person name="Muzny D."/>
            <person name="Jacob L.S."/>
            <person name="Hawes A.C."/>
            <person name="Sodergren E."/>
            <person name="Gill R."/>
            <person name="Hume J."/>
            <person name="Morgan M."/>
            <person name="Fan G."/>
            <person name="Amin A.G."/>
            <person name="Gibbs R.A."/>
            <person name="Hong C."/>
            <person name="Yu X.-J."/>
            <person name="Walker D.H."/>
            <person name="Weinstock G.M."/>
        </authorList>
    </citation>
    <scope>NUCLEOTIDE SEQUENCE [LARGE SCALE GENOMIC DNA]</scope>
    <source>
        <strain>ATCC VR-144 / Wilmington</strain>
    </source>
</reference>
<protein>
    <recommendedName>
        <fullName evidence="1">Large ribosomal subunit protein uL15</fullName>
    </recommendedName>
    <alternativeName>
        <fullName evidence="2">50S ribosomal protein L15</fullName>
    </alternativeName>
</protein>
<accession>Q68W97</accession>
<sequence length="150" mass="16413">MKLNELYNNIGAKKNKKRIARGIGSGKGKTAGRGIKGQKSRSGVAIKGFEGGQTPMIKRLPKRGFKCISTKKYNIINIYNIEKALTDGRLSTNNIITKEKLIEIGLINNKNLVKLLSICSDDFASPLSLKLDAYSSKAKYLIEKAGGQLL</sequence>
<gene>
    <name evidence="1" type="primary">rplO</name>
    <name type="ordered locus">RT0632</name>
</gene>